<proteinExistence type="evidence at protein level"/>
<sequence>IIEKLVNTALGLLSGL</sequence>
<protein>
    <recommendedName>
        <fullName evidence="3">Riparin-2.1</fullName>
    </recommendedName>
</protein>
<feature type="peptide" id="PRO_0000371736" description="Riparin-2.1" evidence="1">
    <location>
        <begin position="1"/>
        <end position="16"/>
    </location>
</feature>
<feature type="modified residue" description="Leucine amide" evidence="1">
    <location>
        <position position="16"/>
    </location>
</feature>
<keyword id="KW-0027">Amidation</keyword>
<keyword id="KW-0878">Amphibian defense peptide</keyword>
<keyword id="KW-0044">Antibiotic</keyword>
<keyword id="KW-0929">Antimicrobial</keyword>
<keyword id="KW-0903">Direct protein sequencing</keyword>
<keyword id="KW-0964">Secreted</keyword>
<accession>P86127</accession>
<organism>
    <name type="scientific">Crinia riparia</name>
    <name type="common">Streambank froglet</name>
    <name type="synonym">Flinders Ranges froglet</name>
    <dbReference type="NCBI Taxonomy" id="446489"/>
    <lineage>
        <taxon>Eukaryota</taxon>
        <taxon>Metazoa</taxon>
        <taxon>Chordata</taxon>
        <taxon>Craniata</taxon>
        <taxon>Vertebrata</taxon>
        <taxon>Euteleostomi</taxon>
        <taxon>Amphibia</taxon>
        <taxon>Batrachia</taxon>
        <taxon>Anura</taxon>
        <taxon>Neobatrachia</taxon>
        <taxon>Myobatrachoidea</taxon>
        <taxon>Myobatrachidae</taxon>
        <taxon>Myobatrachinae</taxon>
        <taxon>Crinia</taxon>
    </lineage>
</organism>
<comment type="function">
    <text evidence="1 2">Has antibacterial activity against the Gram-positive bacterium L.lactis (MIC=25 uM). Lacks antibacterial activity against the Gram-negative bacteria E.cloacae and E.coli, and against the Gram-positive bacteria B.cereus, E.faecalis, L.innocua, M.luteus, S.aureus, S.epidermidis and S.uberis. Does not inhibit the formation of NO by neuronal nitric oxide synthase.</text>
</comment>
<comment type="subcellular location">
    <subcellularLocation>
        <location evidence="1">Secreted</location>
    </subcellularLocation>
</comment>
<comment type="tissue specificity">
    <text evidence="1">Expressed by the skin glands.</text>
</comment>
<name>RIP21_CRIRI</name>
<evidence type="ECO:0000269" key="1">
    <source>
    </source>
</evidence>
<evidence type="ECO:0000269" key="2">
    <source>
    </source>
</evidence>
<evidence type="ECO:0000303" key="3">
    <source>
    </source>
</evidence>
<evidence type="ECO:0000305" key="4"/>
<dbReference type="GO" id="GO:0005576">
    <property type="term" value="C:extracellular region"/>
    <property type="evidence" value="ECO:0000314"/>
    <property type="project" value="UniProtKB"/>
</dbReference>
<dbReference type="GO" id="GO:0050830">
    <property type="term" value="P:defense response to Gram-positive bacterium"/>
    <property type="evidence" value="ECO:0000314"/>
    <property type="project" value="UniProtKB"/>
</dbReference>
<reference evidence="4" key="1">
    <citation type="journal article" date="2006" name="Rapid Commun. Mass Spectrom.">
        <title>Host-defence skin peptides of the Australian streambank froglet Crinia riparia: isolation and sequence determination by positive and negative ion electrospray mass spectrometry.</title>
        <authorList>
            <person name="Maselli V.M."/>
            <person name="Bilusich D."/>
            <person name="Bowie J.H."/>
            <person name="Tyler M.J."/>
        </authorList>
    </citation>
    <scope>PROTEIN SEQUENCE</scope>
    <scope>FUNCTION</scope>
    <scope>SUBCELLULAR LOCATION</scope>
    <scope>TISSUE SPECIFICITY</scope>
    <scope>AMIDATION AT LEU-16</scope>
    <source>
        <tissue evidence="1">Skin secretion</tissue>
    </source>
</reference>
<reference evidence="4" key="2">
    <citation type="journal article" date="2008" name="Regul. Pept.">
        <title>Disulfide-containing peptides from the glandular skin secretions of froglets of the genus Crinia: structure, activity and evolutionary trends.</title>
        <authorList>
            <person name="Jackway R.J."/>
            <person name="Pukala T.L."/>
            <person name="Maselli V.M."/>
            <person name="Musgrave I.F."/>
            <person name="Bowie J.H."/>
            <person name="Liu Y."/>
            <person name="Surinya-Johnson K.H."/>
            <person name="Donnellan S.C."/>
            <person name="Doyle J.R."/>
            <person name="Llewellyn L.E."/>
            <person name="Tyler M.J."/>
        </authorList>
    </citation>
    <scope>FUNCTION</scope>
    <scope>DISCUSSION OF SEQUENCE</scope>
</reference>